<name>MODC_METCA</name>
<dbReference type="EC" id="7.3.2.5" evidence="1"/>
<dbReference type="EMBL" id="AE017282">
    <property type="protein sequence ID" value="AAU92373.1"/>
    <property type="molecule type" value="Genomic_DNA"/>
</dbReference>
<dbReference type="RefSeq" id="WP_010960657.1">
    <property type="nucleotide sequence ID" value="NC_002977.6"/>
</dbReference>
<dbReference type="SMR" id="Q608V9"/>
<dbReference type="STRING" id="243233.MCA1380"/>
<dbReference type="GeneID" id="88223655"/>
<dbReference type="KEGG" id="mca:MCA1380"/>
<dbReference type="eggNOG" id="COG4148">
    <property type="taxonomic scope" value="Bacteria"/>
</dbReference>
<dbReference type="HOGENOM" id="CLU_000604_1_1_6"/>
<dbReference type="Proteomes" id="UP000006821">
    <property type="component" value="Chromosome"/>
</dbReference>
<dbReference type="GO" id="GO:0005886">
    <property type="term" value="C:plasma membrane"/>
    <property type="evidence" value="ECO:0007669"/>
    <property type="project" value="UniProtKB-SubCell"/>
</dbReference>
<dbReference type="GO" id="GO:0015412">
    <property type="term" value="F:ABC-type molybdate transporter activity"/>
    <property type="evidence" value="ECO:0007669"/>
    <property type="project" value="UniProtKB-EC"/>
</dbReference>
<dbReference type="GO" id="GO:0005524">
    <property type="term" value="F:ATP binding"/>
    <property type="evidence" value="ECO:0007669"/>
    <property type="project" value="UniProtKB-KW"/>
</dbReference>
<dbReference type="GO" id="GO:0016887">
    <property type="term" value="F:ATP hydrolysis activity"/>
    <property type="evidence" value="ECO:0007669"/>
    <property type="project" value="InterPro"/>
</dbReference>
<dbReference type="Gene3D" id="2.40.50.100">
    <property type="match status" value="1"/>
</dbReference>
<dbReference type="Gene3D" id="3.40.50.300">
    <property type="entry name" value="P-loop containing nucleotide triphosphate hydrolases"/>
    <property type="match status" value="1"/>
</dbReference>
<dbReference type="InterPro" id="IPR003593">
    <property type="entry name" value="AAA+_ATPase"/>
</dbReference>
<dbReference type="InterPro" id="IPR003439">
    <property type="entry name" value="ABC_transporter-like_ATP-bd"/>
</dbReference>
<dbReference type="InterPro" id="IPR017871">
    <property type="entry name" value="ABC_transporter-like_CS"/>
</dbReference>
<dbReference type="InterPro" id="IPR008995">
    <property type="entry name" value="Mo/tungstate-bd_C_term_dom"/>
</dbReference>
<dbReference type="InterPro" id="IPR011868">
    <property type="entry name" value="ModC_ABC_ATP-bd"/>
</dbReference>
<dbReference type="InterPro" id="IPR050334">
    <property type="entry name" value="Molybdenum_import_ModC"/>
</dbReference>
<dbReference type="InterPro" id="IPR004606">
    <property type="entry name" value="Mop_domain"/>
</dbReference>
<dbReference type="InterPro" id="IPR027417">
    <property type="entry name" value="P-loop_NTPase"/>
</dbReference>
<dbReference type="InterPro" id="IPR005116">
    <property type="entry name" value="Transp-assoc_OB_typ1"/>
</dbReference>
<dbReference type="NCBIfam" id="TIGR02142">
    <property type="entry name" value="modC_ABC"/>
    <property type="match status" value="1"/>
</dbReference>
<dbReference type="PANTHER" id="PTHR43514">
    <property type="entry name" value="ABC TRANSPORTER I FAMILY MEMBER 10"/>
    <property type="match status" value="1"/>
</dbReference>
<dbReference type="PANTHER" id="PTHR43514:SF10">
    <property type="entry name" value="MOLYBDENUM IMPORT ATP-BINDING PROTEIN MODC 2"/>
    <property type="match status" value="1"/>
</dbReference>
<dbReference type="Pfam" id="PF00005">
    <property type="entry name" value="ABC_tran"/>
    <property type="match status" value="1"/>
</dbReference>
<dbReference type="Pfam" id="PF03459">
    <property type="entry name" value="TOBE"/>
    <property type="match status" value="1"/>
</dbReference>
<dbReference type="SMART" id="SM00382">
    <property type="entry name" value="AAA"/>
    <property type="match status" value="1"/>
</dbReference>
<dbReference type="SUPFAM" id="SSF50331">
    <property type="entry name" value="MOP-like"/>
    <property type="match status" value="1"/>
</dbReference>
<dbReference type="SUPFAM" id="SSF52540">
    <property type="entry name" value="P-loop containing nucleoside triphosphate hydrolases"/>
    <property type="match status" value="1"/>
</dbReference>
<dbReference type="PROSITE" id="PS00211">
    <property type="entry name" value="ABC_TRANSPORTER_1"/>
    <property type="match status" value="1"/>
</dbReference>
<dbReference type="PROSITE" id="PS50893">
    <property type="entry name" value="ABC_TRANSPORTER_2"/>
    <property type="match status" value="1"/>
</dbReference>
<dbReference type="PROSITE" id="PS51241">
    <property type="entry name" value="MODC"/>
    <property type="match status" value="1"/>
</dbReference>
<dbReference type="PROSITE" id="PS51866">
    <property type="entry name" value="MOP"/>
    <property type="match status" value="1"/>
</dbReference>
<sequence length="356" mass="39508">MEDIHARFHIDWPGFRLDVDLTLPGRGVTALFGHSGSGKTTLLRCIAGIERVSAGRLTFNGEVWQDEKIWVPTHKRPLGYVFQEASLFPHLTVLGNLRFGMKRASGPVRVSLDQAVELLGIGHLLDRKPDRLSGGERQRVAIARALAVSPRVLLMDEPLAALDLKRKQEILPYLERLHDELDIPVLYVSHSPDEVARLADHLVAMEEGRVIAAGPLKETLARLDLPIRLGEDAGAVLDAVVGERDESWHLARLDFPGGSLWTRDRGIPVGRKIRVRVLARDVSLARQRQEETSVLNLLRGRVDAIEDEDHPGLALVRVRVGESPLLARLTKRSASALGIVRGQEVWVQVKSVALME</sequence>
<organism>
    <name type="scientific">Methylococcus capsulatus (strain ATCC 33009 / NCIMB 11132 / Bath)</name>
    <dbReference type="NCBI Taxonomy" id="243233"/>
    <lineage>
        <taxon>Bacteria</taxon>
        <taxon>Pseudomonadati</taxon>
        <taxon>Pseudomonadota</taxon>
        <taxon>Gammaproteobacteria</taxon>
        <taxon>Methylococcales</taxon>
        <taxon>Methylococcaceae</taxon>
        <taxon>Methylococcus</taxon>
    </lineage>
</organism>
<proteinExistence type="inferred from homology"/>
<comment type="function">
    <text evidence="1">Part of the ABC transporter complex ModABC involved in molybdenum import. Responsible for energy coupling to the transport system.</text>
</comment>
<comment type="catalytic activity">
    <reaction evidence="1">
        <text>molybdate(out) + ATP + H2O = molybdate(in) + ADP + phosphate + H(+)</text>
        <dbReference type="Rhea" id="RHEA:22020"/>
        <dbReference type="ChEBI" id="CHEBI:15377"/>
        <dbReference type="ChEBI" id="CHEBI:15378"/>
        <dbReference type="ChEBI" id="CHEBI:30616"/>
        <dbReference type="ChEBI" id="CHEBI:36264"/>
        <dbReference type="ChEBI" id="CHEBI:43474"/>
        <dbReference type="ChEBI" id="CHEBI:456216"/>
        <dbReference type="EC" id="7.3.2.5"/>
    </reaction>
</comment>
<comment type="subunit">
    <text evidence="1">The complex is composed of two ATP-binding proteins (ModC), two transmembrane proteins (ModB) and a solute-binding protein (ModA).</text>
</comment>
<comment type="subcellular location">
    <subcellularLocation>
        <location evidence="1">Cell inner membrane</location>
        <topology evidence="1">Peripheral membrane protein</topology>
    </subcellularLocation>
</comment>
<comment type="similarity">
    <text evidence="1">Belongs to the ABC transporter superfamily. Molybdate importer (TC 3.A.1.8) family.</text>
</comment>
<evidence type="ECO:0000255" key="1">
    <source>
        <dbReference type="HAMAP-Rule" id="MF_01705"/>
    </source>
</evidence>
<evidence type="ECO:0000255" key="2">
    <source>
        <dbReference type="PROSITE-ProRule" id="PRU01213"/>
    </source>
</evidence>
<feature type="chain" id="PRO_0000092544" description="Molybdenum import ATP-binding protein ModC">
    <location>
        <begin position="1"/>
        <end position="356"/>
    </location>
</feature>
<feature type="domain" description="ABC transporter" evidence="1">
    <location>
        <begin position="1"/>
        <end position="232"/>
    </location>
</feature>
<feature type="domain" description="Mop" evidence="2">
    <location>
        <begin position="291"/>
        <end position="356"/>
    </location>
</feature>
<feature type="binding site" evidence="1">
    <location>
        <begin position="33"/>
        <end position="40"/>
    </location>
    <ligand>
        <name>ATP</name>
        <dbReference type="ChEBI" id="CHEBI:30616"/>
    </ligand>
</feature>
<reference key="1">
    <citation type="journal article" date="2004" name="PLoS Biol.">
        <title>Genomic insights into methanotrophy: the complete genome sequence of Methylococcus capsulatus (Bath).</title>
        <authorList>
            <person name="Ward N.L."/>
            <person name="Larsen O."/>
            <person name="Sakwa J."/>
            <person name="Bruseth L."/>
            <person name="Khouri H.M."/>
            <person name="Durkin A.S."/>
            <person name="Dimitrov G."/>
            <person name="Jiang L."/>
            <person name="Scanlan D."/>
            <person name="Kang K.H."/>
            <person name="Lewis M.R."/>
            <person name="Nelson K.E."/>
            <person name="Methe B.A."/>
            <person name="Wu M."/>
            <person name="Heidelberg J.F."/>
            <person name="Paulsen I.T."/>
            <person name="Fouts D.E."/>
            <person name="Ravel J."/>
            <person name="Tettelin H."/>
            <person name="Ren Q."/>
            <person name="Read T.D."/>
            <person name="DeBoy R.T."/>
            <person name="Seshadri R."/>
            <person name="Salzberg S.L."/>
            <person name="Jensen H.B."/>
            <person name="Birkeland N.K."/>
            <person name="Nelson W.C."/>
            <person name="Dodson R.J."/>
            <person name="Grindhaug S.H."/>
            <person name="Holt I.E."/>
            <person name="Eidhammer I."/>
            <person name="Jonasen I."/>
            <person name="Vanaken S."/>
            <person name="Utterback T.R."/>
            <person name="Feldblyum T.V."/>
            <person name="Fraser C.M."/>
            <person name="Lillehaug J.R."/>
            <person name="Eisen J.A."/>
        </authorList>
    </citation>
    <scope>NUCLEOTIDE SEQUENCE [LARGE SCALE GENOMIC DNA]</scope>
    <source>
        <strain>ATCC 33009 / NCIMB 11132 / Bath</strain>
    </source>
</reference>
<gene>
    <name evidence="1" type="primary">modC</name>
    <name type="ordered locus">MCA1380</name>
</gene>
<protein>
    <recommendedName>
        <fullName evidence="1">Molybdenum import ATP-binding protein ModC</fullName>
        <ecNumber evidence="1">7.3.2.5</ecNumber>
    </recommendedName>
</protein>
<keyword id="KW-0067">ATP-binding</keyword>
<keyword id="KW-0997">Cell inner membrane</keyword>
<keyword id="KW-1003">Cell membrane</keyword>
<keyword id="KW-0472">Membrane</keyword>
<keyword id="KW-0500">Molybdenum</keyword>
<keyword id="KW-0547">Nucleotide-binding</keyword>
<keyword id="KW-1185">Reference proteome</keyword>
<keyword id="KW-1278">Translocase</keyword>
<keyword id="KW-0813">Transport</keyword>
<accession>Q608V9</accession>